<comment type="function">
    <text>Part of the binding-protein-dependent transport system for alpha-glucosides such as sucrose, maltose and trehalose. Probably responsible for the translocation of the substrate across the membrane.</text>
</comment>
<comment type="subcellular location">
    <subcellularLocation>
        <location evidence="1">Cell inner membrane</location>
        <topology evidence="2">Multi-pass membrane protein</topology>
    </subcellularLocation>
</comment>
<comment type="similarity">
    <text evidence="3">Belongs to the binding-protein-dependent transport system permease family. MalFG subfamily.</text>
</comment>
<comment type="sequence caution" evidence="3">
    <conflict type="erroneous initiation">
        <sequence resource="EMBL-CDS" id="AAD12048"/>
    </conflict>
</comment>
<sequence length="380" mass="41127">MNPSRRSPLTWAVHLSVLLLVLLWTLPTAGLLISSLRDKDQLAVSGWWTALSSSSRNAVVRAPSAEDQVERDGKFVISGNLLEGRGEVSAFGFSSREPTKFKPGETAELNDGERLTVQSDGSFEIVSDQRMEGSRGQRIFFTATTPPRFTLDNYAEVLSAAGIGRSFLNSLTVAVPSTVIPILIAAFAAYALAWMPFPGRAVLLAVVVGLLVVPLQMSLIPLLQLYNGVGAFFGVSAKTYMGIWLAHTGFGLPLAIYLLRNYMAGLPREIMESARVDGASDFDIFVKIILPLSFPALASFAIFQFLWTWNDLLVAIVFLGAGDDKLVLTGRLVNLLGSRGGNWEILTASAFITIVVPLIVFFALQRYLVRGLLAGSVKGG</sequence>
<protein>
    <recommendedName>
        <fullName>Alpha-glucoside transport system permease protein AglG</fullName>
    </recommendedName>
</protein>
<organism>
    <name type="scientific">Rhizobium meliloti (strain 1021)</name>
    <name type="common">Ensifer meliloti</name>
    <name type="synonym">Sinorhizobium meliloti</name>
    <dbReference type="NCBI Taxonomy" id="266834"/>
    <lineage>
        <taxon>Bacteria</taxon>
        <taxon>Pseudomonadati</taxon>
        <taxon>Pseudomonadota</taxon>
        <taxon>Alphaproteobacteria</taxon>
        <taxon>Hyphomicrobiales</taxon>
        <taxon>Rhizobiaceae</taxon>
        <taxon>Sinorhizobium/Ensifer group</taxon>
        <taxon>Sinorhizobium</taxon>
    </lineage>
</organism>
<name>AGLG_RHIME</name>
<proteinExistence type="inferred from homology"/>
<reference key="1">
    <citation type="journal article" date="1999" name="J. Bacteriol.">
        <title>A novel Sinorhizobium meliloti operon encodes an alpha-glucosidase and a periplasmic-binding-protein-dependent transport system for alpha-glucosides.</title>
        <authorList>
            <person name="Willis L.B."/>
            <person name="Walker G.C."/>
        </authorList>
    </citation>
    <scope>NUCLEOTIDE SEQUENCE [GENOMIC DNA]</scope>
    <source>
        <strain>1021</strain>
    </source>
</reference>
<reference key="2">
    <citation type="journal article" date="2001" name="Proc. Natl. Acad. Sci. U.S.A.">
        <title>Analysis of the chromosome sequence of the legume symbiont Sinorhizobium meliloti strain 1021.</title>
        <authorList>
            <person name="Capela D."/>
            <person name="Barloy-Hubler F."/>
            <person name="Gouzy J."/>
            <person name="Bothe G."/>
            <person name="Ampe F."/>
            <person name="Batut J."/>
            <person name="Boistard P."/>
            <person name="Becker A."/>
            <person name="Boutry M."/>
            <person name="Cadieu E."/>
            <person name="Dreano S."/>
            <person name="Gloux S."/>
            <person name="Godrie T."/>
            <person name="Goffeau A."/>
            <person name="Kahn D."/>
            <person name="Kiss E."/>
            <person name="Lelaure V."/>
            <person name="Masuy D."/>
            <person name="Pohl T."/>
            <person name="Portetelle D."/>
            <person name="Puehler A."/>
            <person name="Purnelle B."/>
            <person name="Ramsperger U."/>
            <person name="Renard C."/>
            <person name="Thebault P."/>
            <person name="Vandenbol M."/>
            <person name="Weidner S."/>
            <person name="Galibert F."/>
        </authorList>
    </citation>
    <scope>NUCLEOTIDE SEQUENCE [LARGE SCALE GENOMIC DNA]</scope>
    <source>
        <strain>1021</strain>
    </source>
</reference>
<reference key="3">
    <citation type="journal article" date="2001" name="Science">
        <title>The composite genome of the legume symbiont Sinorhizobium meliloti.</title>
        <authorList>
            <person name="Galibert F."/>
            <person name="Finan T.M."/>
            <person name="Long S.R."/>
            <person name="Puehler A."/>
            <person name="Abola P."/>
            <person name="Ampe F."/>
            <person name="Barloy-Hubler F."/>
            <person name="Barnett M.J."/>
            <person name="Becker A."/>
            <person name="Boistard P."/>
            <person name="Bothe G."/>
            <person name="Boutry M."/>
            <person name="Bowser L."/>
            <person name="Buhrmester J."/>
            <person name="Cadieu E."/>
            <person name="Capela D."/>
            <person name="Chain P."/>
            <person name="Cowie A."/>
            <person name="Davis R.W."/>
            <person name="Dreano S."/>
            <person name="Federspiel N.A."/>
            <person name="Fisher R.F."/>
            <person name="Gloux S."/>
            <person name="Godrie T."/>
            <person name="Goffeau A."/>
            <person name="Golding B."/>
            <person name="Gouzy J."/>
            <person name="Gurjal M."/>
            <person name="Hernandez-Lucas I."/>
            <person name="Hong A."/>
            <person name="Huizar L."/>
            <person name="Hyman R.W."/>
            <person name="Jones T."/>
            <person name="Kahn D."/>
            <person name="Kahn M.L."/>
            <person name="Kalman S."/>
            <person name="Keating D.H."/>
            <person name="Kiss E."/>
            <person name="Komp C."/>
            <person name="Lelaure V."/>
            <person name="Masuy D."/>
            <person name="Palm C."/>
            <person name="Peck M.C."/>
            <person name="Pohl T.M."/>
            <person name="Portetelle D."/>
            <person name="Purnelle B."/>
            <person name="Ramsperger U."/>
            <person name="Surzycki R."/>
            <person name="Thebault P."/>
            <person name="Vandenbol M."/>
            <person name="Vorhoelter F.J."/>
            <person name="Weidner S."/>
            <person name="Wells D.H."/>
            <person name="Wong K."/>
            <person name="Yeh K.-C."/>
            <person name="Batut J."/>
        </authorList>
    </citation>
    <scope>NUCLEOTIDE SEQUENCE [LARGE SCALE GENOMIC DNA]</scope>
    <source>
        <strain>1021</strain>
    </source>
</reference>
<evidence type="ECO:0000250" key="1"/>
<evidence type="ECO:0000255" key="2">
    <source>
        <dbReference type="PROSITE-ProRule" id="PRU00441"/>
    </source>
</evidence>
<evidence type="ECO:0000305" key="3"/>
<gene>
    <name type="primary">aglG</name>
    <name type="ordered locus">R00697</name>
    <name type="ORF">SMc03063</name>
</gene>
<keyword id="KW-0997">Cell inner membrane</keyword>
<keyword id="KW-1003">Cell membrane</keyword>
<keyword id="KW-0472">Membrane</keyword>
<keyword id="KW-1185">Reference proteome</keyword>
<keyword id="KW-0762">Sugar transport</keyword>
<keyword id="KW-0812">Transmembrane</keyword>
<keyword id="KW-1133">Transmembrane helix</keyword>
<keyword id="KW-0813">Transport</keyword>
<dbReference type="EMBL" id="AF045609">
    <property type="protein sequence ID" value="AAD12048.1"/>
    <property type="status" value="ALT_INIT"/>
    <property type="molecule type" value="Genomic_DNA"/>
</dbReference>
<dbReference type="EMBL" id="AL591688">
    <property type="protein sequence ID" value="CAC45269.1"/>
    <property type="molecule type" value="Genomic_DNA"/>
</dbReference>
<dbReference type="RefSeq" id="NP_384803.1">
    <property type="nucleotide sequence ID" value="NC_003047.1"/>
</dbReference>
<dbReference type="RefSeq" id="WP_003529834.1">
    <property type="nucleotide sequence ID" value="NC_003047.1"/>
</dbReference>
<dbReference type="SMR" id="Q9Z3R7"/>
<dbReference type="TCDB" id="3.A.1.1.8">
    <property type="family name" value="the atp-binding cassette (abc) superfamily"/>
</dbReference>
<dbReference type="EnsemblBacteria" id="CAC45269">
    <property type="protein sequence ID" value="CAC45269"/>
    <property type="gene ID" value="SMc03063"/>
</dbReference>
<dbReference type="KEGG" id="sme:SMc03063"/>
<dbReference type="PATRIC" id="fig|266834.11.peg.2072"/>
<dbReference type="eggNOG" id="COG0395">
    <property type="taxonomic scope" value="Bacteria"/>
</dbReference>
<dbReference type="HOGENOM" id="CLU_016047_1_2_5"/>
<dbReference type="OrthoDB" id="9815445at2"/>
<dbReference type="BRENDA" id="7.5.2.B9">
    <property type="organism ID" value="5347"/>
</dbReference>
<dbReference type="Proteomes" id="UP000001976">
    <property type="component" value="Chromosome"/>
</dbReference>
<dbReference type="GO" id="GO:0005886">
    <property type="term" value="C:plasma membrane"/>
    <property type="evidence" value="ECO:0007669"/>
    <property type="project" value="UniProtKB-SubCell"/>
</dbReference>
<dbReference type="GO" id="GO:0055085">
    <property type="term" value="P:transmembrane transport"/>
    <property type="evidence" value="ECO:0007669"/>
    <property type="project" value="InterPro"/>
</dbReference>
<dbReference type="CDD" id="cd06261">
    <property type="entry name" value="TM_PBP2"/>
    <property type="match status" value="1"/>
</dbReference>
<dbReference type="Gene3D" id="1.10.3720.10">
    <property type="entry name" value="MetI-like"/>
    <property type="match status" value="1"/>
</dbReference>
<dbReference type="InterPro" id="IPR000515">
    <property type="entry name" value="MetI-like"/>
</dbReference>
<dbReference type="InterPro" id="IPR035906">
    <property type="entry name" value="MetI-like_sf"/>
</dbReference>
<dbReference type="PANTHER" id="PTHR43744">
    <property type="entry name" value="ABC TRANSPORTER PERMEASE PROTEIN MG189-RELATED-RELATED"/>
    <property type="match status" value="1"/>
</dbReference>
<dbReference type="PANTHER" id="PTHR43744:SF4">
    <property type="entry name" value="OSMOPROTECTIVE COMPOUNDS UPTAKE PERMEASE PROTEIN GGTD"/>
    <property type="match status" value="1"/>
</dbReference>
<dbReference type="Pfam" id="PF00528">
    <property type="entry name" value="BPD_transp_1"/>
    <property type="match status" value="1"/>
</dbReference>
<dbReference type="SUPFAM" id="SSF161098">
    <property type="entry name" value="MetI-like"/>
    <property type="match status" value="1"/>
</dbReference>
<dbReference type="PROSITE" id="PS50928">
    <property type="entry name" value="ABC_TM1"/>
    <property type="match status" value="1"/>
</dbReference>
<accession>Q9Z3R7</accession>
<feature type="chain" id="PRO_0000059941" description="Alpha-glucoside transport system permease protein AglG">
    <location>
        <begin position="1"/>
        <end position="380"/>
    </location>
</feature>
<feature type="transmembrane region" description="Helical" evidence="2">
    <location>
        <begin position="13"/>
        <end position="33"/>
    </location>
</feature>
<feature type="transmembrane region" description="Helical" evidence="2">
    <location>
        <begin position="179"/>
        <end position="199"/>
    </location>
</feature>
<feature type="transmembrane region" description="Helical" evidence="2">
    <location>
        <begin position="202"/>
        <end position="222"/>
    </location>
</feature>
<feature type="transmembrane region" description="Helical" evidence="2">
    <location>
        <begin position="239"/>
        <end position="259"/>
    </location>
</feature>
<feature type="transmembrane region" description="Helical" evidence="2">
    <location>
        <begin position="288"/>
        <end position="308"/>
    </location>
</feature>
<feature type="transmembrane region" description="Helical" evidence="2">
    <location>
        <begin position="344"/>
        <end position="364"/>
    </location>
</feature>
<feature type="domain" description="ABC transmembrane type-1" evidence="2">
    <location>
        <begin position="167"/>
        <end position="364"/>
    </location>
</feature>